<gene>
    <name evidence="1" type="primary">valS</name>
    <name type="ordered locus">DR_0148</name>
</gene>
<accession>Q9RY06</accession>
<proteinExistence type="inferred from homology"/>
<evidence type="ECO:0000255" key="1">
    <source>
        <dbReference type="HAMAP-Rule" id="MF_02004"/>
    </source>
</evidence>
<reference key="1">
    <citation type="journal article" date="1999" name="Science">
        <title>Genome sequence of the radioresistant bacterium Deinococcus radiodurans R1.</title>
        <authorList>
            <person name="White O."/>
            <person name="Eisen J.A."/>
            <person name="Heidelberg J.F."/>
            <person name="Hickey E.K."/>
            <person name="Peterson J.D."/>
            <person name="Dodson R.J."/>
            <person name="Haft D.H."/>
            <person name="Gwinn M.L."/>
            <person name="Nelson W.C."/>
            <person name="Richardson D.L."/>
            <person name="Moffat K.S."/>
            <person name="Qin H."/>
            <person name="Jiang L."/>
            <person name="Pamphile W."/>
            <person name="Crosby M."/>
            <person name="Shen M."/>
            <person name="Vamathevan J.J."/>
            <person name="Lam P."/>
            <person name="McDonald L.A."/>
            <person name="Utterback T.R."/>
            <person name="Zalewski C."/>
            <person name="Makarova K.S."/>
            <person name="Aravind L."/>
            <person name="Daly M.J."/>
            <person name="Minton K.W."/>
            <person name="Fleischmann R.D."/>
            <person name="Ketchum K.A."/>
            <person name="Nelson K.E."/>
            <person name="Salzberg S.L."/>
            <person name="Smith H.O."/>
            <person name="Venter J.C."/>
            <person name="Fraser C.M."/>
        </authorList>
    </citation>
    <scope>NUCLEOTIDE SEQUENCE [LARGE SCALE GENOMIC DNA]</scope>
    <source>
        <strain>ATCC 13939 / DSM 20539 / JCM 16871 / CCUG 27074 / LMG 4051 / NBRC 15346 / NCIMB 9279 / VKM B-1422 / R1</strain>
    </source>
</reference>
<feature type="chain" id="PRO_0000106223" description="Valine--tRNA ligase">
    <location>
        <begin position="1"/>
        <end position="913"/>
    </location>
</feature>
<feature type="coiled-coil region" evidence="1">
    <location>
        <begin position="851"/>
        <end position="912"/>
    </location>
</feature>
<feature type="short sequence motif" description="'HIGH' region">
    <location>
        <begin position="49"/>
        <end position="59"/>
    </location>
</feature>
<feature type="short sequence motif" description="'KMSKS' region">
    <location>
        <begin position="544"/>
        <end position="548"/>
    </location>
</feature>
<feature type="binding site" evidence="1">
    <location>
        <position position="547"/>
    </location>
    <ligand>
        <name>ATP</name>
        <dbReference type="ChEBI" id="CHEBI:30616"/>
    </ligand>
</feature>
<protein>
    <recommendedName>
        <fullName evidence="1">Valine--tRNA ligase</fullName>
        <ecNumber evidence="1">6.1.1.9</ecNumber>
    </recommendedName>
    <alternativeName>
        <fullName evidence="1">Valyl-tRNA synthetase</fullName>
        <shortName evidence="1">ValRS</shortName>
    </alternativeName>
</protein>
<comment type="function">
    <text evidence="1">Catalyzes the attachment of valine to tRNA(Val). As ValRS can inadvertently accommodate and process structurally similar amino acids such as threonine, to avoid such errors, it has a 'posttransfer' editing activity that hydrolyzes mischarged Thr-tRNA(Val) in a tRNA-dependent manner.</text>
</comment>
<comment type="catalytic activity">
    <reaction evidence="1">
        <text>tRNA(Val) + L-valine + ATP = L-valyl-tRNA(Val) + AMP + diphosphate</text>
        <dbReference type="Rhea" id="RHEA:10704"/>
        <dbReference type="Rhea" id="RHEA-COMP:9672"/>
        <dbReference type="Rhea" id="RHEA-COMP:9708"/>
        <dbReference type="ChEBI" id="CHEBI:30616"/>
        <dbReference type="ChEBI" id="CHEBI:33019"/>
        <dbReference type="ChEBI" id="CHEBI:57762"/>
        <dbReference type="ChEBI" id="CHEBI:78442"/>
        <dbReference type="ChEBI" id="CHEBI:78537"/>
        <dbReference type="ChEBI" id="CHEBI:456215"/>
        <dbReference type="EC" id="6.1.1.9"/>
    </reaction>
</comment>
<comment type="subunit">
    <text evidence="1">Monomer.</text>
</comment>
<comment type="subcellular location">
    <subcellularLocation>
        <location evidence="1">Cytoplasm</location>
    </subcellularLocation>
</comment>
<comment type="domain">
    <text evidence="1">ValRS has two distinct active sites: one for aminoacylation and one for editing. The misactivated threonine is translocated from the active site to the editing site.</text>
</comment>
<comment type="domain">
    <text evidence="1">The C-terminal coiled-coil domain is crucial for aminoacylation activity.</text>
</comment>
<comment type="similarity">
    <text evidence="1">Belongs to the class-I aminoacyl-tRNA synthetase family. ValS type 1 subfamily.</text>
</comment>
<dbReference type="EC" id="6.1.1.9" evidence="1"/>
<dbReference type="EMBL" id="AE000513">
    <property type="protein sequence ID" value="AAF09735.1"/>
    <property type="molecule type" value="Genomic_DNA"/>
</dbReference>
<dbReference type="PIR" id="E75554">
    <property type="entry name" value="E75554"/>
</dbReference>
<dbReference type="RefSeq" id="NP_293872.1">
    <property type="nucleotide sequence ID" value="NC_001263.1"/>
</dbReference>
<dbReference type="RefSeq" id="WP_010886794.1">
    <property type="nucleotide sequence ID" value="NC_001263.1"/>
</dbReference>
<dbReference type="SMR" id="Q9RY06"/>
<dbReference type="FunCoup" id="Q9RY06">
    <property type="interactions" value="456"/>
</dbReference>
<dbReference type="STRING" id="243230.DR_0148"/>
<dbReference type="PaxDb" id="243230-DR_0148"/>
<dbReference type="EnsemblBacteria" id="AAF09735">
    <property type="protein sequence ID" value="AAF09735"/>
    <property type="gene ID" value="DR_0148"/>
</dbReference>
<dbReference type="GeneID" id="69516379"/>
<dbReference type="KEGG" id="dra:DR_0148"/>
<dbReference type="PATRIC" id="fig|243230.17.peg.313"/>
<dbReference type="eggNOG" id="COG0525">
    <property type="taxonomic scope" value="Bacteria"/>
</dbReference>
<dbReference type="HOGENOM" id="CLU_001493_0_2_0"/>
<dbReference type="InParanoid" id="Q9RY06"/>
<dbReference type="OrthoDB" id="9810365at2"/>
<dbReference type="Proteomes" id="UP000002524">
    <property type="component" value="Chromosome 1"/>
</dbReference>
<dbReference type="GO" id="GO:0005829">
    <property type="term" value="C:cytosol"/>
    <property type="evidence" value="ECO:0000318"/>
    <property type="project" value="GO_Central"/>
</dbReference>
<dbReference type="GO" id="GO:0002161">
    <property type="term" value="F:aminoacyl-tRNA deacylase activity"/>
    <property type="evidence" value="ECO:0007669"/>
    <property type="project" value="InterPro"/>
</dbReference>
<dbReference type="GO" id="GO:0005524">
    <property type="term" value="F:ATP binding"/>
    <property type="evidence" value="ECO:0007669"/>
    <property type="project" value="UniProtKB-UniRule"/>
</dbReference>
<dbReference type="GO" id="GO:0004832">
    <property type="term" value="F:valine-tRNA ligase activity"/>
    <property type="evidence" value="ECO:0000318"/>
    <property type="project" value="GO_Central"/>
</dbReference>
<dbReference type="GO" id="GO:0006438">
    <property type="term" value="P:valyl-tRNA aminoacylation"/>
    <property type="evidence" value="ECO:0000318"/>
    <property type="project" value="GO_Central"/>
</dbReference>
<dbReference type="CDD" id="cd07962">
    <property type="entry name" value="Anticodon_Ia_Val"/>
    <property type="match status" value="1"/>
</dbReference>
<dbReference type="CDD" id="cd00817">
    <property type="entry name" value="ValRS_core"/>
    <property type="match status" value="1"/>
</dbReference>
<dbReference type="FunFam" id="1.10.287.380:FF:000001">
    <property type="entry name" value="Valine--tRNA ligase"/>
    <property type="match status" value="1"/>
</dbReference>
<dbReference type="FunFam" id="3.40.50.620:FF:000032">
    <property type="entry name" value="Valine--tRNA ligase"/>
    <property type="match status" value="1"/>
</dbReference>
<dbReference type="FunFam" id="1.10.730.10:FF:000009">
    <property type="entry name" value="Valine--tRNA ligase, mitochondrial"/>
    <property type="match status" value="1"/>
</dbReference>
<dbReference type="Gene3D" id="3.40.50.620">
    <property type="entry name" value="HUPs"/>
    <property type="match status" value="2"/>
</dbReference>
<dbReference type="Gene3D" id="1.10.730.10">
    <property type="entry name" value="Isoleucyl-tRNA Synthetase, Domain 1"/>
    <property type="match status" value="1"/>
</dbReference>
<dbReference type="Gene3D" id="1.10.287.380">
    <property type="entry name" value="Valyl-tRNA synthetase, C-terminal domain"/>
    <property type="match status" value="1"/>
</dbReference>
<dbReference type="HAMAP" id="MF_02004">
    <property type="entry name" value="Val_tRNA_synth_type1"/>
    <property type="match status" value="1"/>
</dbReference>
<dbReference type="InterPro" id="IPR001412">
    <property type="entry name" value="aa-tRNA-synth_I_CS"/>
</dbReference>
<dbReference type="InterPro" id="IPR002300">
    <property type="entry name" value="aa-tRNA-synth_Ia"/>
</dbReference>
<dbReference type="InterPro" id="IPR033705">
    <property type="entry name" value="Anticodon_Ia_Val"/>
</dbReference>
<dbReference type="InterPro" id="IPR013155">
    <property type="entry name" value="M/V/L/I-tRNA-synth_anticd-bd"/>
</dbReference>
<dbReference type="InterPro" id="IPR014729">
    <property type="entry name" value="Rossmann-like_a/b/a_fold"/>
</dbReference>
<dbReference type="InterPro" id="IPR010978">
    <property type="entry name" value="tRNA-bd_arm"/>
</dbReference>
<dbReference type="InterPro" id="IPR009080">
    <property type="entry name" value="tRNAsynth_Ia_anticodon-bd"/>
</dbReference>
<dbReference type="InterPro" id="IPR037118">
    <property type="entry name" value="Val-tRNA_synth_C_sf"/>
</dbReference>
<dbReference type="InterPro" id="IPR019499">
    <property type="entry name" value="Val-tRNA_synth_tRNA-bd"/>
</dbReference>
<dbReference type="InterPro" id="IPR009008">
    <property type="entry name" value="Val/Leu/Ile-tRNA-synth_edit"/>
</dbReference>
<dbReference type="InterPro" id="IPR002303">
    <property type="entry name" value="Valyl-tRNA_ligase"/>
</dbReference>
<dbReference type="NCBIfam" id="NF004349">
    <property type="entry name" value="PRK05729.1"/>
    <property type="match status" value="1"/>
</dbReference>
<dbReference type="NCBIfam" id="TIGR00422">
    <property type="entry name" value="valS"/>
    <property type="match status" value="1"/>
</dbReference>
<dbReference type="PANTHER" id="PTHR11946:SF93">
    <property type="entry name" value="VALINE--TRNA LIGASE, CHLOROPLASTIC_MITOCHONDRIAL 2"/>
    <property type="match status" value="1"/>
</dbReference>
<dbReference type="PANTHER" id="PTHR11946">
    <property type="entry name" value="VALYL-TRNA SYNTHETASES"/>
    <property type="match status" value="1"/>
</dbReference>
<dbReference type="Pfam" id="PF08264">
    <property type="entry name" value="Anticodon_1"/>
    <property type="match status" value="1"/>
</dbReference>
<dbReference type="Pfam" id="PF00133">
    <property type="entry name" value="tRNA-synt_1"/>
    <property type="match status" value="1"/>
</dbReference>
<dbReference type="Pfam" id="PF10458">
    <property type="entry name" value="Val_tRNA-synt_C"/>
    <property type="match status" value="1"/>
</dbReference>
<dbReference type="PRINTS" id="PR00986">
    <property type="entry name" value="TRNASYNTHVAL"/>
</dbReference>
<dbReference type="SUPFAM" id="SSF47323">
    <property type="entry name" value="Anticodon-binding domain of a subclass of class I aminoacyl-tRNA synthetases"/>
    <property type="match status" value="1"/>
</dbReference>
<dbReference type="SUPFAM" id="SSF52374">
    <property type="entry name" value="Nucleotidylyl transferase"/>
    <property type="match status" value="1"/>
</dbReference>
<dbReference type="SUPFAM" id="SSF46589">
    <property type="entry name" value="tRNA-binding arm"/>
    <property type="match status" value="1"/>
</dbReference>
<dbReference type="SUPFAM" id="SSF50677">
    <property type="entry name" value="ValRS/IleRS/LeuRS editing domain"/>
    <property type="match status" value="1"/>
</dbReference>
<dbReference type="PROSITE" id="PS00178">
    <property type="entry name" value="AA_TRNA_LIGASE_I"/>
    <property type="match status" value="1"/>
</dbReference>
<organism>
    <name type="scientific">Deinococcus radiodurans (strain ATCC 13939 / DSM 20539 / JCM 16871 / CCUG 27074 / LMG 4051 / NBRC 15346 / NCIMB 9279 / VKM B-1422 / R1)</name>
    <dbReference type="NCBI Taxonomy" id="243230"/>
    <lineage>
        <taxon>Bacteria</taxon>
        <taxon>Thermotogati</taxon>
        <taxon>Deinococcota</taxon>
        <taxon>Deinococci</taxon>
        <taxon>Deinococcales</taxon>
        <taxon>Deinococcaceae</taxon>
        <taxon>Deinococcus</taxon>
    </lineage>
</organism>
<sequence>MTDPHTTTLPTQFDPTGIEPKWAARWRSEPFRADATSGKDPFTIVIPPPNVTGNLHLGHALDNTLIDTLIRYKRMAGFEALYLPGMDHAGISTQVVVERQLKDAGTSRHDLGREAFLEKVWEWKGKSGGMILDQLTRLGVSADWTRERFTMDEGLSRAVRTQFVKLYHDGLAYRGERIVNWDPASQTTLSELEIDREVRKGKMYTLSYKLENSAERGSNGETGEIRIATVRPETIFADQAIAVHPEDERFRHLVGQKARIPLTDRWVPIIADEAVEMEFGVGALKITPAHDPTDFEVGERHGLERPSVIDLDGNLTRDELVPAEFQGLERFAARKAVVKALEESGDLLEQKDHDTAIGLSERTKVPVEPIISEQWFVKMKPFADQVLEGLDKGEIKLVPERYTKVNRDWLENIRDWNISRQLWWGHQIPAWYDKEGNIYVPDPENPELDCDQDPRYAHLNLRRDPDVFDTWFSSNLWPFSTLGWPDTDSEDFRKFYPTQVLVTGYDILFFWVARMQMAGYGLTGQAPFSTVMLHGLYLDAKGQKMSKSKGNGIDPLELFGQYGVDACRFAFTFLSTGGQDIKHDARRFEQGRNFANKLWNATRFALMRLGEARIEGSDDLSAYVRAAVTLPDGVLLRSKDVLAQLKERDDLTLADRWIISRLNDVTAEASAQLDAFDIGAAIRTLYSFTWDEFCDWYIEAAKPELASGNLGTMATLKVVLEHVLKLLHPFMPFITSELYAALGHRRQIAVHSWPQPDAALHDAEATKAFDALRSAVDSARSLKSELGLSPQDRLNVAVDGDLADVVRQNARVVEGIARVNLVPALEGRTLSQVAPGVTILAPLEGTVDIADWVKKQQKRLAELDKQIKQAQGKLNNEGFVARAPAEVIEEEKRRVADFGAQKERLEGVLAQLG</sequence>
<name>SYV_DEIRA</name>
<keyword id="KW-0030">Aminoacyl-tRNA synthetase</keyword>
<keyword id="KW-0067">ATP-binding</keyword>
<keyword id="KW-0175">Coiled coil</keyword>
<keyword id="KW-0963">Cytoplasm</keyword>
<keyword id="KW-0436">Ligase</keyword>
<keyword id="KW-0547">Nucleotide-binding</keyword>
<keyword id="KW-0648">Protein biosynthesis</keyword>
<keyword id="KW-1185">Reference proteome</keyword>